<reference key="1">
    <citation type="journal article" date="2018" name="Planta">
        <title>Xyloglucan O-acetyltransferases from Arabidopsis thaliana and Populus trichocarpa catalyze acetylation of fucosylated galactose residues on xyloglucan side chains.</title>
        <authorList>
            <person name="Zhong R."/>
            <person name="Cui D."/>
            <person name="Ye Z.H."/>
        </authorList>
    </citation>
    <scope>NUCLEOTIDE SEQUENCE [MRNA]</scope>
    <scope>FUNCTION</scope>
    <scope>CATALYTIC ACTIVITY</scope>
    <scope>BIOPHYSICOCHEMICAL PROPERTIES</scope>
</reference>
<reference key="2">
    <citation type="journal article" date="2006" name="Science">
        <title>The genome of black cottonwood, Populus trichocarpa (Torr. &amp; Gray).</title>
        <authorList>
            <person name="Tuskan G.A."/>
            <person name="Difazio S."/>
            <person name="Jansson S."/>
            <person name="Bohlmann J."/>
            <person name="Grigoriev I."/>
            <person name="Hellsten U."/>
            <person name="Putnam N."/>
            <person name="Ralph S."/>
            <person name="Rombauts S."/>
            <person name="Salamov A."/>
            <person name="Schein J."/>
            <person name="Sterck L."/>
            <person name="Aerts A."/>
            <person name="Bhalerao R.R."/>
            <person name="Bhalerao R.P."/>
            <person name="Blaudez D."/>
            <person name="Boerjan W."/>
            <person name="Brun A."/>
            <person name="Brunner A."/>
            <person name="Busov V."/>
            <person name="Campbell M."/>
            <person name="Carlson J."/>
            <person name="Chalot M."/>
            <person name="Chapman J."/>
            <person name="Chen G.-L."/>
            <person name="Cooper D."/>
            <person name="Coutinho P.M."/>
            <person name="Couturier J."/>
            <person name="Covert S."/>
            <person name="Cronk Q."/>
            <person name="Cunningham R."/>
            <person name="Davis J."/>
            <person name="Degroeve S."/>
            <person name="Dejardin A."/>
            <person name="dePamphilis C.W."/>
            <person name="Detter J."/>
            <person name="Dirks B."/>
            <person name="Dubchak I."/>
            <person name="Duplessis S."/>
            <person name="Ehlting J."/>
            <person name="Ellis B."/>
            <person name="Gendler K."/>
            <person name="Goodstein D."/>
            <person name="Gribskov M."/>
            <person name="Grimwood J."/>
            <person name="Groover A."/>
            <person name="Gunter L."/>
            <person name="Hamberger B."/>
            <person name="Heinze B."/>
            <person name="Helariutta Y."/>
            <person name="Henrissat B."/>
            <person name="Holligan D."/>
            <person name="Holt R."/>
            <person name="Huang W."/>
            <person name="Islam-Faridi N."/>
            <person name="Jones S."/>
            <person name="Jones-Rhoades M."/>
            <person name="Jorgensen R."/>
            <person name="Joshi C."/>
            <person name="Kangasjaervi J."/>
            <person name="Karlsson J."/>
            <person name="Kelleher C."/>
            <person name="Kirkpatrick R."/>
            <person name="Kirst M."/>
            <person name="Kohler A."/>
            <person name="Kalluri U."/>
            <person name="Larimer F."/>
            <person name="Leebens-Mack J."/>
            <person name="Leple J.-C."/>
            <person name="Locascio P."/>
            <person name="Lou Y."/>
            <person name="Lucas S."/>
            <person name="Martin F."/>
            <person name="Montanini B."/>
            <person name="Napoli C."/>
            <person name="Nelson D.R."/>
            <person name="Nelson C."/>
            <person name="Nieminen K."/>
            <person name="Nilsson O."/>
            <person name="Pereda V."/>
            <person name="Peter G."/>
            <person name="Philippe R."/>
            <person name="Pilate G."/>
            <person name="Poliakov A."/>
            <person name="Razumovskaya J."/>
            <person name="Richardson P."/>
            <person name="Rinaldi C."/>
            <person name="Ritland K."/>
            <person name="Rouze P."/>
            <person name="Ryaboy D."/>
            <person name="Schmutz J."/>
            <person name="Schrader J."/>
            <person name="Segerman B."/>
            <person name="Shin H."/>
            <person name="Siddiqui A."/>
            <person name="Sterky F."/>
            <person name="Terry A."/>
            <person name="Tsai C.-J."/>
            <person name="Uberbacher E."/>
            <person name="Unneberg P."/>
            <person name="Vahala J."/>
            <person name="Wall K."/>
            <person name="Wessler S."/>
            <person name="Yang G."/>
            <person name="Yin T."/>
            <person name="Douglas C."/>
            <person name="Marra M."/>
            <person name="Sandberg G."/>
            <person name="Van de Peer Y."/>
            <person name="Rokhsar D.S."/>
        </authorList>
    </citation>
    <scope>NUCLEOTIDE SEQUENCE [LARGE SCALE GENOMIC DNA]</scope>
    <source>
        <strain>cv. Nisqually</strain>
    </source>
</reference>
<comment type="function">
    <text evidence="4">Xyloglucan acetyltransferase that catalyzes the acetylation of fucosylated Gal residues on xyloglucan side chains (PubMed:30083810). Predominantly catalyze 6-O-monoacetylation of Gal residues in the Fuc-Gal-Xyl trisaccharide side chains of xyloglucan oligomers (PubMed:30083810).</text>
</comment>
<comment type="biophysicochemical properties">
    <kinetics>
        <KM evidence="4">9.95 mM for xyloglucan oligomer</KM>
        <Vmax evidence="4">73.5 pmol/min/mg enzyme with xyloglucan oligomer as substrate</Vmax>
    </kinetics>
</comment>
<comment type="subcellular location">
    <subcellularLocation>
        <location evidence="6">Golgi apparatus membrane</location>
        <topology evidence="6">Single-pass type II membrane protein</topology>
    </subcellularLocation>
</comment>
<comment type="similarity">
    <text evidence="6">Belongs to the PC-esterase family. TBL subfamily.</text>
</comment>
<gene>
    <name evidence="5" type="primary">XGOAT1</name>
    <name evidence="8" type="ORF">POPTR_008G146100</name>
</gene>
<name>XGAT1_POPTR</name>
<accession>B9HJR7</accession>
<sequence length="429" mass="49207">MGSPFKDHHHHHHPFSLAKKLIPWTFYAMIPLVLFRLYFYPYPLHNITTPILTSSSSSVSSSTPFVAEETSCDYTTGKWVRDKRGPLYNGSACGTIKEGQNCIAHGRPDMGYLYWRWKPKHCKLPRFEPNTFLQLLRNKHLAFVGDSMARNQLESLLCMLSSASAPNLVYRDGDDNKFRRWYFESHNINISVYWSPFLVKGVEKSNTGPNHNQLYLDHVDERWAADMNGIDMIVLSIGHWFLHPAVYYEGDQVLGCHYCPGLNHTEIGFYDVLRKAIKTTLKALIDRKGANSNGINAFVTTFSPAHFEGDWDKLGACPKTKPYKEGDKALEGMDADMRQIEVEEVEAAKMNSTQLEKFRLEALDVTSLSLMRPDGHPGPYMHPFPFANGVTERVQNDCVHWCLPGPIDTWNEILLEVIKKWDYESRREE</sequence>
<keyword id="KW-1015">Disulfide bond</keyword>
<keyword id="KW-0325">Glycoprotein</keyword>
<keyword id="KW-0333">Golgi apparatus</keyword>
<keyword id="KW-0472">Membrane</keyword>
<keyword id="KW-1185">Reference proteome</keyword>
<keyword id="KW-0735">Signal-anchor</keyword>
<keyword id="KW-0808">Transferase</keyword>
<keyword id="KW-0812">Transmembrane</keyword>
<keyword id="KW-1133">Transmembrane helix</keyword>
<protein>
    <recommendedName>
        <fullName evidence="5">Xyloglucan O-acetyltransferase 1</fullName>
        <shortName evidence="5">PtrXGOAT1</shortName>
        <ecNumber evidence="4">2.3.1.-</ecNumber>
    </recommendedName>
</protein>
<evidence type="ECO:0000250" key="1">
    <source>
        <dbReference type="UniProtKB" id="Q9LY46"/>
    </source>
</evidence>
<evidence type="ECO:0000255" key="2"/>
<evidence type="ECO:0000255" key="3">
    <source>
        <dbReference type="PROSITE-ProRule" id="PRU00498"/>
    </source>
</evidence>
<evidence type="ECO:0000269" key="4">
    <source>
    </source>
</evidence>
<evidence type="ECO:0000303" key="5">
    <source>
    </source>
</evidence>
<evidence type="ECO:0000305" key="6"/>
<evidence type="ECO:0000305" key="7">
    <source>
    </source>
</evidence>
<evidence type="ECO:0000312" key="8">
    <source>
        <dbReference type="EMBL" id="PNT24667.1"/>
    </source>
</evidence>
<proteinExistence type="evidence at protein level"/>
<dbReference type="EC" id="2.3.1.-" evidence="4"/>
<dbReference type="EMBL" id="MH568690">
    <property type="protein sequence ID" value="AXN57018.1"/>
    <property type="molecule type" value="mRNA"/>
</dbReference>
<dbReference type="EMBL" id="CM009297">
    <property type="protein sequence ID" value="PNT24667.1"/>
    <property type="molecule type" value="Genomic_DNA"/>
</dbReference>
<dbReference type="RefSeq" id="XP_002312510.1">
    <property type="nucleotide sequence ID" value="XM_002312474.2"/>
</dbReference>
<dbReference type="SMR" id="B9HJR7"/>
<dbReference type="FunCoup" id="B9HJR7">
    <property type="interactions" value="1"/>
</dbReference>
<dbReference type="STRING" id="3694.B9HJR7"/>
<dbReference type="GlyCosmos" id="B9HJR7">
    <property type="glycosylation" value="5 sites, No reported glycans"/>
</dbReference>
<dbReference type="EnsemblPlants" id="Potri.008G146100.1.v4.1">
    <property type="protein sequence ID" value="Potri.008G146100.1.v4.1"/>
    <property type="gene ID" value="Potri.008G146100.v4.1"/>
</dbReference>
<dbReference type="GeneID" id="7457851"/>
<dbReference type="Gramene" id="Potri.008G146100.1.v4.1">
    <property type="protein sequence ID" value="Potri.008G146100.1.v4.1"/>
    <property type="gene ID" value="Potri.008G146100.v4.1"/>
</dbReference>
<dbReference type="KEGG" id="pop:7457851"/>
<dbReference type="eggNOG" id="ENOG502QQXW">
    <property type="taxonomic scope" value="Eukaryota"/>
</dbReference>
<dbReference type="HOGENOM" id="CLU_020953_6_0_1"/>
<dbReference type="InParanoid" id="B9HJR7"/>
<dbReference type="OMA" id="SVSVYWS"/>
<dbReference type="OrthoDB" id="630188at2759"/>
<dbReference type="Proteomes" id="UP000006729">
    <property type="component" value="Chromosome 8"/>
</dbReference>
<dbReference type="ExpressionAtlas" id="B9HJR7">
    <property type="expression patterns" value="differential"/>
</dbReference>
<dbReference type="GO" id="GO:0005794">
    <property type="term" value="C:Golgi apparatus"/>
    <property type="evidence" value="ECO:0000318"/>
    <property type="project" value="GO_Central"/>
</dbReference>
<dbReference type="GO" id="GO:0000139">
    <property type="term" value="C:Golgi membrane"/>
    <property type="evidence" value="ECO:0007669"/>
    <property type="project" value="UniProtKB-SubCell"/>
</dbReference>
<dbReference type="GO" id="GO:0016413">
    <property type="term" value="F:O-acetyltransferase activity"/>
    <property type="evidence" value="ECO:0000318"/>
    <property type="project" value="GO_Central"/>
</dbReference>
<dbReference type="GO" id="GO:1990538">
    <property type="term" value="F:xylan O-acetyltransferase activity"/>
    <property type="evidence" value="ECO:0000314"/>
    <property type="project" value="UniProtKB"/>
</dbReference>
<dbReference type="GO" id="GO:1990937">
    <property type="term" value="P:xylan acetylation"/>
    <property type="evidence" value="ECO:0000314"/>
    <property type="project" value="UniProtKB"/>
</dbReference>
<dbReference type="InterPro" id="IPR029962">
    <property type="entry name" value="TBL"/>
</dbReference>
<dbReference type="InterPro" id="IPR026057">
    <property type="entry name" value="TBL_C"/>
</dbReference>
<dbReference type="InterPro" id="IPR025846">
    <property type="entry name" value="TBL_N"/>
</dbReference>
<dbReference type="PANTHER" id="PTHR32285">
    <property type="entry name" value="PROTEIN TRICHOME BIREFRINGENCE-LIKE 9-RELATED"/>
    <property type="match status" value="1"/>
</dbReference>
<dbReference type="PANTHER" id="PTHR32285:SF57">
    <property type="entry name" value="XYLOGLUCAN O-ACETYLTRANSFERASE 1"/>
    <property type="match status" value="1"/>
</dbReference>
<dbReference type="Pfam" id="PF13839">
    <property type="entry name" value="PC-Esterase"/>
    <property type="match status" value="1"/>
</dbReference>
<dbReference type="Pfam" id="PF14416">
    <property type="entry name" value="PMR5N"/>
    <property type="match status" value="1"/>
</dbReference>
<organism>
    <name type="scientific">Populus trichocarpa</name>
    <name type="common">Western balsam poplar</name>
    <name type="synonym">Populus balsamifera subsp. trichocarpa</name>
    <dbReference type="NCBI Taxonomy" id="3694"/>
    <lineage>
        <taxon>Eukaryota</taxon>
        <taxon>Viridiplantae</taxon>
        <taxon>Streptophyta</taxon>
        <taxon>Embryophyta</taxon>
        <taxon>Tracheophyta</taxon>
        <taxon>Spermatophyta</taxon>
        <taxon>Magnoliopsida</taxon>
        <taxon>eudicotyledons</taxon>
        <taxon>Gunneridae</taxon>
        <taxon>Pentapetalae</taxon>
        <taxon>rosids</taxon>
        <taxon>fabids</taxon>
        <taxon>Malpighiales</taxon>
        <taxon>Salicaceae</taxon>
        <taxon>Saliceae</taxon>
        <taxon>Populus</taxon>
    </lineage>
</organism>
<feature type="chain" id="PRO_0000453954" description="Xyloglucan O-acetyltransferase 1">
    <location>
        <begin position="1"/>
        <end position="429"/>
    </location>
</feature>
<feature type="topological domain" description="Cytoplasmic" evidence="6">
    <location>
        <begin position="1"/>
        <end position="20"/>
    </location>
</feature>
<feature type="transmembrane region" description="Helical; Signal-anchor for type II membrane protein" evidence="2">
    <location>
        <begin position="21"/>
        <end position="41"/>
    </location>
</feature>
<feature type="topological domain" description="Lumenal" evidence="6">
    <location>
        <begin position="42"/>
        <end position="429"/>
    </location>
</feature>
<feature type="short sequence motif" description="GDS motif" evidence="7">
    <location>
        <begin position="145"/>
        <end position="147"/>
    </location>
</feature>
<feature type="short sequence motif" description="DXXH motif" evidence="7">
    <location>
        <begin position="397"/>
        <end position="400"/>
    </location>
</feature>
<feature type="active site" description="Nucleophile" evidence="1">
    <location>
        <position position="147"/>
    </location>
</feature>
<feature type="active site" description="Proton donor" evidence="1">
    <location>
        <position position="397"/>
    </location>
</feature>
<feature type="active site" description="Proton acceptor" evidence="1">
    <location>
        <position position="400"/>
    </location>
</feature>
<feature type="glycosylation site" description="N-linked (GlcNAc...) asparagine" evidence="3">
    <location>
        <position position="46"/>
    </location>
</feature>
<feature type="glycosylation site" description="N-linked (GlcNAc...) asparagine" evidence="3">
    <location>
        <position position="89"/>
    </location>
</feature>
<feature type="glycosylation site" description="N-linked (GlcNAc...) asparagine" evidence="3">
    <location>
        <position position="189"/>
    </location>
</feature>
<feature type="glycosylation site" description="N-linked (GlcNAc...) asparagine" evidence="3">
    <location>
        <position position="263"/>
    </location>
</feature>
<feature type="glycosylation site" description="N-linked (GlcNAc...) asparagine" evidence="3">
    <location>
        <position position="351"/>
    </location>
</feature>
<feature type="disulfide bond" evidence="1">
    <location>
        <begin position="72"/>
        <end position="122"/>
    </location>
</feature>
<feature type="disulfide bond" evidence="1">
    <location>
        <begin position="93"/>
        <end position="158"/>
    </location>
</feature>
<feature type="disulfide bond" evidence="1">
    <location>
        <begin position="102"/>
        <end position="402"/>
    </location>
</feature>
<feature type="disulfide bond" evidence="1">
    <location>
        <begin position="317"/>
        <end position="398"/>
    </location>
</feature>